<comment type="catalytic activity">
    <reaction>
        <text>deamido-NAD(+) + L-glutamine + ATP + H2O = L-glutamate + AMP + diphosphate + NAD(+) + H(+)</text>
        <dbReference type="Rhea" id="RHEA:24384"/>
        <dbReference type="ChEBI" id="CHEBI:15377"/>
        <dbReference type="ChEBI" id="CHEBI:15378"/>
        <dbReference type="ChEBI" id="CHEBI:29985"/>
        <dbReference type="ChEBI" id="CHEBI:30616"/>
        <dbReference type="ChEBI" id="CHEBI:33019"/>
        <dbReference type="ChEBI" id="CHEBI:57540"/>
        <dbReference type="ChEBI" id="CHEBI:58359"/>
        <dbReference type="ChEBI" id="CHEBI:58437"/>
        <dbReference type="ChEBI" id="CHEBI:456215"/>
        <dbReference type="EC" id="6.3.5.1"/>
    </reaction>
</comment>
<comment type="pathway">
    <text>Cofactor biosynthesis; NAD(+) biosynthesis; NAD(+) from deamido-NAD(+) (L-Gln route): step 1/1.</text>
</comment>
<comment type="similarity">
    <text evidence="4">In the C-terminal section; belongs to the NAD synthetase family.</text>
</comment>
<proteinExistence type="evidence at transcript level"/>
<dbReference type="EC" id="6.3.5.1"/>
<dbReference type="EMBL" id="AC073944">
    <property type="protein sequence ID" value="AAG50835.1"/>
    <property type="molecule type" value="Genomic_DNA"/>
</dbReference>
<dbReference type="EMBL" id="CP002684">
    <property type="protein sequence ID" value="AEE33184.1"/>
    <property type="molecule type" value="Genomic_DNA"/>
</dbReference>
<dbReference type="EMBL" id="BT010741">
    <property type="protein sequence ID" value="AAR23711.1"/>
    <property type="molecule type" value="mRNA"/>
</dbReference>
<dbReference type="EMBL" id="AK228292">
    <property type="protein sequence ID" value="BAF00237.1"/>
    <property type="molecule type" value="mRNA"/>
</dbReference>
<dbReference type="PIR" id="E96592">
    <property type="entry name" value="E96592"/>
</dbReference>
<dbReference type="RefSeq" id="NP_175906.1">
    <property type="nucleotide sequence ID" value="NM_104383.4"/>
</dbReference>
<dbReference type="SMR" id="Q9C723"/>
<dbReference type="BioGRID" id="27177">
    <property type="interactions" value="2"/>
</dbReference>
<dbReference type="FunCoup" id="Q9C723">
    <property type="interactions" value="3918"/>
</dbReference>
<dbReference type="STRING" id="3702.Q9C723"/>
<dbReference type="PaxDb" id="3702-AT1G55090.1"/>
<dbReference type="ProteomicsDB" id="251079"/>
<dbReference type="EnsemblPlants" id="AT1G55090.1">
    <property type="protein sequence ID" value="AT1G55090.1"/>
    <property type="gene ID" value="AT1G55090"/>
</dbReference>
<dbReference type="GeneID" id="841952"/>
<dbReference type="Gramene" id="AT1G55090.1">
    <property type="protein sequence ID" value="AT1G55090.1"/>
    <property type="gene ID" value="AT1G55090"/>
</dbReference>
<dbReference type="KEGG" id="ath:AT1G55090"/>
<dbReference type="Araport" id="AT1G55090"/>
<dbReference type="TAIR" id="AT1G55090"/>
<dbReference type="eggNOG" id="KOG2303">
    <property type="taxonomic scope" value="Eukaryota"/>
</dbReference>
<dbReference type="HOGENOM" id="CLU_011884_2_0_1"/>
<dbReference type="InParanoid" id="Q9C723"/>
<dbReference type="OMA" id="TSQEVCN"/>
<dbReference type="OrthoDB" id="2020662at2759"/>
<dbReference type="PhylomeDB" id="Q9C723"/>
<dbReference type="BioCyc" id="ARA:AT1G55090-MONOMER"/>
<dbReference type="UniPathway" id="UPA00253">
    <property type="reaction ID" value="UER00334"/>
</dbReference>
<dbReference type="PRO" id="PR:Q9C723"/>
<dbReference type="Proteomes" id="UP000006548">
    <property type="component" value="Chromosome 1"/>
</dbReference>
<dbReference type="ExpressionAtlas" id="Q9C723">
    <property type="expression patterns" value="baseline and differential"/>
</dbReference>
<dbReference type="GO" id="GO:0005737">
    <property type="term" value="C:cytoplasm"/>
    <property type="evidence" value="ECO:0007669"/>
    <property type="project" value="InterPro"/>
</dbReference>
<dbReference type="GO" id="GO:0005524">
    <property type="term" value="F:ATP binding"/>
    <property type="evidence" value="ECO:0007669"/>
    <property type="project" value="UniProtKB-KW"/>
</dbReference>
<dbReference type="GO" id="GO:0004359">
    <property type="term" value="F:glutaminase activity"/>
    <property type="evidence" value="ECO:0007669"/>
    <property type="project" value="InterPro"/>
</dbReference>
<dbReference type="GO" id="GO:0003952">
    <property type="term" value="F:NAD+ synthase (glutamine-hydrolyzing) activity"/>
    <property type="evidence" value="ECO:0007669"/>
    <property type="project" value="UniProtKB-EC"/>
</dbReference>
<dbReference type="GO" id="GO:0009435">
    <property type="term" value="P:NAD biosynthetic process"/>
    <property type="evidence" value="ECO:0007669"/>
    <property type="project" value="UniProtKB-UniPathway"/>
</dbReference>
<dbReference type="CDD" id="cd07570">
    <property type="entry name" value="GAT_Gln-NAD-synth"/>
    <property type="match status" value="1"/>
</dbReference>
<dbReference type="CDD" id="cd00553">
    <property type="entry name" value="NAD_synthase"/>
    <property type="match status" value="1"/>
</dbReference>
<dbReference type="FunFam" id="3.40.50.620:FF:000036">
    <property type="entry name" value="Glutamine-dependent NAD(+) synthetase"/>
    <property type="match status" value="1"/>
</dbReference>
<dbReference type="FunFam" id="3.60.110.10:FF:000003">
    <property type="entry name" value="Glutamine-dependent NAD(+) synthetase"/>
    <property type="match status" value="1"/>
</dbReference>
<dbReference type="Gene3D" id="3.60.110.10">
    <property type="entry name" value="Carbon-nitrogen hydrolase"/>
    <property type="match status" value="1"/>
</dbReference>
<dbReference type="Gene3D" id="3.40.50.620">
    <property type="entry name" value="HUPs"/>
    <property type="match status" value="1"/>
</dbReference>
<dbReference type="HAMAP" id="MF_02090">
    <property type="entry name" value="NadE_glutamine_dep"/>
    <property type="match status" value="1"/>
</dbReference>
<dbReference type="InterPro" id="IPR003010">
    <property type="entry name" value="C-N_Hydrolase"/>
</dbReference>
<dbReference type="InterPro" id="IPR036526">
    <property type="entry name" value="C-N_Hydrolase_sf"/>
</dbReference>
<dbReference type="InterPro" id="IPR014445">
    <property type="entry name" value="Gln-dep_NAD_synthase"/>
</dbReference>
<dbReference type="InterPro" id="IPR022310">
    <property type="entry name" value="NAD/GMP_synthase"/>
</dbReference>
<dbReference type="InterPro" id="IPR003694">
    <property type="entry name" value="NAD_synthase"/>
</dbReference>
<dbReference type="InterPro" id="IPR014729">
    <property type="entry name" value="Rossmann-like_a/b/a_fold"/>
</dbReference>
<dbReference type="PANTHER" id="PTHR23090:SF9">
    <property type="entry name" value="GLUTAMINE-DEPENDENT NAD(+) SYNTHETASE"/>
    <property type="match status" value="1"/>
</dbReference>
<dbReference type="PANTHER" id="PTHR23090">
    <property type="entry name" value="NH 3 /GLUTAMINE-DEPENDENT NAD + SYNTHETASE"/>
    <property type="match status" value="1"/>
</dbReference>
<dbReference type="Pfam" id="PF00795">
    <property type="entry name" value="CN_hydrolase"/>
    <property type="match status" value="1"/>
</dbReference>
<dbReference type="Pfam" id="PF02540">
    <property type="entry name" value="NAD_synthase"/>
    <property type="match status" value="1"/>
</dbReference>
<dbReference type="PIRSF" id="PIRSF006630">
    <property type="entry name" value="NADS_GAT"/>
    <property type="match status" value="1"/>
</dbReference>
<dbReference type="SUPFAM" id="SSF52402">
    <property type="entry name" value="Adenine nucleotide alpha hydrolases-like"/>
    <property type="match status" value="1"/>
</dbReference>
<dbReference type="SUPFAM" id="SSF56317">
    <property type="entry name" value="Carbon-nitrogen hydrolase"/>
    <property type="match status" value="1"/>
</dbReference>
<dbReference type="PROSITE" id="PS50263">
    <property type="entry name" value="CN_HYDROLASE"/>
    <property type="match status" value="1"/>
</dbReference>
<evidence type="ECO:0000250" key="1"/>
<evidence type="ECO:0000250" key="2">
    <source>
        <dbReference type="UniProtKB" id="P9WJJ3"/>
    </source>
</evidence>
<evidence type="ECO:0000255" key="3">
    <source>
        <dbReference type="PROSITE-ProRule" id="PRU00054"/>
    </source>
</evidence>
<evidence type="ECO:0000305" key="4"/>
<sequence length="725" mass="80900">MRLLKVATCNLNQWAMDFESNMKNIKASIAEAKAAGAVIRLGPELEVTGYGCEDHFLELDTVTHAWECLKELLLGDWTDDILCSIGMPVIKGAERYNCQVLCMNRRIIMIRPKMWLANDGNYRELRWFTAWKQREELEEFQLPIEISEALEQKSVPFGYGYIQFIDTAVAAEVCEELFSPLPPHAELALNGVEVFMNASGSHHQLRKLDIRLNAFMGATHARGGVYMYSNQQGCDGSRLYYDGCACIVVNGNVVAQGSQFSLRDVEVIISQVDLDAVASLRGSISSFQEQASCKVKVSSVAVPCRLTQSFNLKMTLSSPKKIIYHSPQEEIAFGPACWMWDYLRRSGASGFLLPLSGGADSSSVAAIVGCMCQLVVKEIAKGDEQVKADANRIGNYANGQFPTDSKEFAKRIFYTVFMGSENSSEETKRRSKQLADEIGAWHLDVCIDGVVSAVLSLFQTVTGKRPRYKVDGGSNAENLGLQNIQARMRMVLAFMLASLLPWVHSKPGFYLVLGSSNVDEGLRGYLTKYDCSSADINPIGSISKMDLRLFLKWAATNLGYPSLAEIEAAPPTAELEPIRSDYSQLDEVDMGMTYEELSVYGRMRKIFRCGPVSMFKNLCYKWGTKLSPAEVAEKVKYFFKYYSINRHKMTVLTPSYHAESYSPEDNRFDLRQFLYNSKWPYQFKKIDEIVDSLNGDSVAFPEEEANSNKEIGVVAANSGDPSAGL</sequence>
<gene>
    <name type="ordered locus">At1g55090</name>
    <name type="ORF">T7N22.4</name>
</gene>
<feature type="chain" id="PRO_0000423484" description="Glutamine-dependent NAD(+) synthetase">
    <location>
        <begin position="1"/>
        <end position="725"/>
    </location>
</feature>
<feature type="domain" description="CN hydrolase" evidence="3">
    <location>
        <begin position="4"/>
        <end position="274"/>
    </location>
</feature>
<feature type="region of interest" description="Ligase" evidence="1">
    <location>
        <begin position="324"/>
        <end position="709"/>
    </location>
</feature>
<feature type="active site" description="Proton acceptor; for glutaminase activity" evidence="2">
    <location>
        <position position="44"/>
    </location>
</feature>
<feature type="active site" description="For glutaminase activity" evidence="2">
    <location>
        <position position="113"/>
    </location>
</feature>
<feature type="active site" description="Nucleophile; for glutaminase activity" evidence="2">
    <location>
        <position position="174"/>
    </location>
</feature>
<feature type="active site" evidence="1">
    <location>
        <position position="356"/>
    </location>
</feature>
<feature type="binding site" evidence="1">
    <location>
        <begin position="354"/>
        <end position="361"/>
    </location>
    <ligand>
        <name>ATP</name>
        <dbReference type="ChEBI" id="CHEBI:30616"/>
    </ligand>
</feature>
<accession>Q9C723</accession>
<keyword id="KW-0067">ATP-binding</keyword>
<keyword id="KW-0436">Ligase</keyword>
<keyword id="KW-0520">NAD</keyword>
<keyword id="KW-0547">Nucleotide-binding</keyword>
<keyword id="KW-1185">Reference proteome</keyword>
<name>NADE_ARATH</name>
<reference key="1">
    <citation type="journal article" date="2000" name="Nature">
        <title>Sequence and analysis of chromosome 1 of the plant Arabidopsis thaliana.</title>
        <authorList>
            <person name="Theologis A."/>
            <person name="Ecker J.R."/>
            <person name="Palm C.J."/>
            <person name="Federspiel N.A."/>
            <person name="Kaul S."/>
            <person name="White O."/>
            <person name="Alonso J."/>
            <person name="Altafi H."/>
            <person name="Araujo R."/>
            <person name="Bowman C.L."/>
            <person name="Brooks S.Y."/>
            <person name="Buehler E."/>
            <person name="Chan A."/>
            <person name="Chao Q."/>
            <person name="Chen H."/>
            <person name="Cheuk R.F."/>
            <person name="Chin C.W."/>
            <person name="Chung M.K."/>
            <person name="Conn L."/>
            <person name="Conway A.B."/>
            <person name="Conway A.R."/>
            <person name="Creasy T.H."/>
            <person name="Dewar K."/>
            <person name="Dunn P."/>
            <person name="Etgu P."/>
            <person name="Feldblyum T.V."/>
            <person name="Feng J.-D."/>
            <person name="Fong B."/>
            <person name="Fujii C.Y."/>
            <person name="Gill J.E."/>
            <person name="Goldsmith A.D."/>
            <person name="Haas B."/>
            <person name="Hansen N.F."/>
            <person name="Hughes B."/>
            <person name="Huizar L."/>
            <person name="Hunter J.L."/>
            <person name="Jenkins J."/>
            <person name="Johnson-Hopson C."/>
            <person name="Khan S."/>
            <person name="Khaykin E."/>
            <person name="Kim C.J."/>
            <person name="Koo H.L."/>
            <person name="Kremenetskaia I."/>
            <person name="Kurtz D.B."/>
            <person name="Kwan A."/>
            <person name="Lam B."/>
            <person name="Langin-Hooper S."/>
            <person name="Lee A."/>
            <person name="Lee J.M."/>
            <person name="Lenz C.A."/>
            <person name="Li J.H."/>
            <person name="Li Y.-P."/>
            <person name="Lin X."/>
            <person name="Liu S.X."/>
            <person name="Liu Z.A."/>
            <person name="Luros J.S."/>
            <person name="Maiti R."/>
            <person name="Marziali A."/>
            <person name="Militscher J."/>
            <person name="Miranda M."/>
            <person name="Nguyen M."/>
            <person name="Nierman W.C."/>
            <person name="Osborne B.I."/>
            <person name="Pai G."/>
            <person name="Peterson J."/>
            <person name="Pham P.K."/>
            <person name="Rizzo M."/>
            <person name="Rooney T."/>
            <person name="Rowley D."/>
            <person name="Sakano H."/>
            <person name="Salzberg S.L."/>
            <person name="Schwartz J.R."/>
            <person name="Shinn P."/>
            <person name="Southwick A.M."/>
            <person name="Sun H."/>
            <person name="Tallon L.J."/>
            <person name="Tambunga G."/>
            <person name="Toriumi M.J."/>
            <person name="Town C.D."/>
            <person name="Utterback T."/>
            <person name="Van Aken S."/>
            <person name="Vaysberg M."/>
            <person name="Vysotskaia V.S."/>
            <person name="Walker M."/>
            <person name="Wu D."/>
            <person name="Yu G."/>
            <person name="Fraser C.M."/>
            <person name="Venter J.C."/>
            <person name="Davis R.W."/>
        </authorList>
    </citation>
    <scope>NUCLEOTIDE SEQUENCE [LARGE SCALE GENOMIC DNA]</scope>
    <source>
        <strain>cv. Columbia</strain>
    </source>
</reference>
<reference key="2">
    <citation type="journal article" date="2017" name="Plant J.">
        <title>Araport11: a complete reannotation of the Arabidopsis thaliana reference genome.</title>
        <authorList>
            <person name="Cheng C.Y."/>
            <person name="Krishnakumar V."/>
            <person name="Chan A.P."/>
            <person name="Thibaud-Nissen F."/>
            <person name="Schobel S."/>
            <person name="Town C.D."/>
        </authorList>
    </citation>
    <scope>GENOME REANNOTATION</scope>
    <source>
        <strain>cv. Columbia</strain>
    </source>
</reference>
<reference key="3">
    <citation type="submission" date="2003-11" db="EMBL/GenBank/DDBJ databases">
        <title>Arabidopsis cDNA clones.</title>
        <authorList>
            <person name="Cheuk R.F."/>
            <person name="Chen H."/>
            <person name="Kim C.J."/>
            <person name="Shinn P."/>
            <person name="Carninci P."/>
            <person name="Hayashizaki Y."/>
            <person name="Ishida J."/>
            <person name="Kamiya A."/>
            <person name="Kawai J."/>
            <person name="Narusaka M."/>
            <person name="Sakurai T."/>
            <person name="Satou M."/>
            <person name="Seki M."/>
            <person name="Shinozaki K."/>
            <person name="Ecker J.R."/>
        </authorList>
    </citation>
    <scope>NUCLEOTIDE SEQUENCE [LARGE SCALE MRNA]</scope>
    <source>
        <strain>cv. Columbia</strain>
    </source>
</reference>
<reference key="4">
    <citation type="submission" date="2006-07" db="EMBL/GenBank/DDBJ databases">
        <title>Large-scale analysis of RIKEN Arabidopsis full-length (RAFL) cDNAs.</title>
        <authorList>
            <person name="Totoki Y."/>
            <person name="Seki M."/>
            <person name="Ishida J."/>
            <person name="Nakajima M."/>
            <person name="Enju A."/>
            <person name="Kamiya A."/>
            <person name="Narusaka M."/>
            <person name="Shin-i T."/>
            <person name="Nakagawa M."/>
            <person name="Sakamoto N."/>
            <person name="Oishi K."/>
            <person name="Kohara Y."/>
            <person name="Kobayashi M."/>
            <person name="Toyoda A."/>
            <person name="Sakaki Y."/>
            <person name="Sakurai T."/>
            <person name="Iida K."/>
            <person name="Akiyama K."/>
            <person name="Satou M."/>
            <person name="Toyoda T."/>
            <person name="Konagaya A."/>
            <person name="Carninci P."/>
            <person name="Kawai J."/>
            <person name="Hayashizaki Y."/>
            <person name="Shinozaki K."/>
        </authorList>
    </citation>
    <scope>NUCLEOTIDE SEQUENCE [LARGE SCALE MRNA]</scope>
    <source>
        <strain>cv. Columbia</strain>
    </source>
</reference>
<protein>
    <recommendedName>
        <fullName>Glutamine-dependent NAD(+) synthetase</fullName>
        <ecNumber>6.3.5.1</ecNumber>
    </recommendedName>
    <alternativeName>
        <fullName>NAD(+) synthase [glutamine-hydrolyzing]</fullName>
    </alternativeName>
    <alternativeName>
        <fullName>NAD(+) synthetase</fullName>
    </alternativeName>
</protein>
<organism>
    <name type="scientific">Arabidopsis thaliana</name>
    <name type="common">Mouse-ear cress</name>
    <dbReference type="NCBI Taxonomy" id="3702"/>
    <lineage>
        <taxon>Eukaryota</taxon>
        <taxon>Viridiplantae</taxon>
        <taxon>Streptophyta</taxon>
        <taxon>Embryophyta</taxon>
        <taxon>Tracheophyta</taxon>
        <taxon>Spermatophyta</taxon>
        <taxon>Magnoliopsida</taxon>
        <taxon>eudicotyledons</taxon>
        <taxon>Gunneridae</taxon>
        <taxon>Pentapetalae</taxon>
        <taxon>rosids</taxon>
        <taxon>malvids</taxon>
        <taxon>Brassicales</taxon>
        <taxon>Brassicaceae</taxon>
        <taxon>Camelineae</taxon>
        <taxon>Arabidopsis</taxon>
    </lineage>
</organism>